<comment type="function">
    <text evidence="1">IF-3 binds to the 30S ribosomal subunit and shifts the equilibrium between 70S ribosomes and their 50S and 30S subunits in favor of the free subunits, thus enhancing the availability of 30S subunits on which protein synthesis initiation begins.</text>
</comment>
<comment type="subunit">
    <text evidence="1">Monomer.</text>
</comment>
<comment type="subcellular location">
    <subcellularLocation>
        <location evidence="1">Cytoplasm</location>
    </subcellularLocation>
</comment>
<comment type="similarity">
    <text evidence="1">Belongs to the IF-3 family.</text>
</comment>
<dbReference type="EMBL" id="AE015924">
    <property type="protein sequence ID" value="AAQ66114.1"/>
    <property type="molecule type" value="Genomic_DNA"/>
</dbReference>
<dbReference type="RefSeq" id="WP_005874110.1">
    <property type="nucleotide sequence ID" value="NC_002950.2"/>
</dbReference>
<dbReference type="SMR" id="Q7MVQ6"/>
<dbReference type="STRING" id="242619.PG_0991"/>
<dbReference type="EnsemblBacteria" id="AAQ66114">
    <property type="protein sequence ID" value="AAQ66114"/>
    <property type="gene ID" value="PG_0991"/>
</dbReference>
<dbReference type="KEGG" id="pgi:PG_0991"/>
<dbReference type="eggNOG" id="COG0290">
    <property type="taxonomic scope" value="Bacteria"/>
</dbReference>
<dbReference type="HOGENOM" id="CLU_054919_3_2_10"/>
<dbReference type="Proteomes" id="UP000000588">
    <property type="component" value="Chromosome"/>
</dbReference>
<dbReference type="GO" id="GO:0005829">
    <property type="term" value="C:cytosol"/>
    <property type="evidence" value="ECO:0007669"/>
    <property type="project" value="TreeGrafter"/>
</dbReference>
<dbReference type="GO" id="GO:0016020">
    <property type="term" value="C:membrane"/>
    <property type="evidence" value="ECO:0007669"/>
    <property type="project" value="TreeGrafter"/>
</dbReference>
<dbReference type="GO" id="GO:0043022">
    <property type="term" value="F:ribosome binding"/>
    <property type="evidence" value="ECO:0007669"/>
    <property type="project" value="TreeGrafter"/>
</dbReference>
<dbReference type="GO" id="GO:0003743">
    <property type="term" value="F:translation initiation factor activity"/>
    <property type="evidence" value="ECO:0007669"/>
    <property type="project" value="UniProtKB-UniRule"/>
</dbReference>
<dbReference type="GO" id="GO:0032790">
    <property type="term" value="P:ribosome disassembly"/>
    <property type="evidence" value="ECO:0007669"/>
    <property type="project" value="TreeGrafter"/>
</dbReference>
<dbReference type="FunFam" id="3.10.20.80:FF:000001">
    <property type="entry name" value="Translation initiation factor IF-3"/>
    <property type="match status" value="1"/>
</dbReference>
<dbReference type="FunFam" id="3.30.110.10:FF:000001">
    <property type="entry name" value="Translation initiation factor IF-3"/>
    <property type="match status" value="1"/>
</dbReference>
<dbReference type="Gene3D" id="3.30.110.10">
    <property type="entry name" value="Translation initiation factor 3 (IF-3), C-terminal domain"/>
    <property type="match status" value="1"/>
</dbReference>
<dbReference type="Gene3D" id="3.10.20.80">
    <property type="entry name" value="Translation initiation factor 3 (IF-3), N-terminal domain"/>
    <property type="match status" value="1"/>
</dbReference>
<dbReference type="HAMAP" id="MF_00080">
    <property type="entry name" value="IF_3"/>
    <property type="match status" value="1"/>
</dbReference>
<dbReference type="InterPro" id="IPR036788">
    <property type="entry name" value="T_IF-3_C_sf"/>
</dbReference>
<dbReference type="InterPro" id="IPR036787">
    <property type="entry name" value="T_IF-3_N_sf"/>
</dbReference>
<dbReference type="InterPro" id="IPR001288">
    <property type="entry name" value="Translation_initiation_fac_3"/>
</dbReference>
<dbReference type="InterPro" id="IPR019815">
    <property type="entry name" value="Translation_initiation_fac_3_C"/>
</dbReference>
<dbReference type="InterPro" id="IPR019814">
    <property type="entry name" value="Translation_initiation_fac_3_N"/>
</dbReference>
<dbReference type="NCBIfam" id="TIGR00168">
    <property type="entry name" value="infC"/>
    <property type="match status" value="1"/>
</dbReference>
<dbReference type="PANTHER" id="PTHR10938">
    <property type="entry name" value="TRANSLATION INITIATION FACTOR IF-3"/>
    <property type="match status" value="1"/>
</dbReference>
<dbReference type="PANTHER" id="PTHR10938:SF0">
    <property type="entry name" value="TRANSLATION INITIATION FACTOR IF-3, MITOCHONDRIAL"/>
    <property type="match status" value="1"/>
</dbReference>
<dbReference type="Pfam" id="PF00707">
    <property type="entry name" value="IF3_C"/>
    <property type="match status" value="1"/>
</dbReference>
<dbReference type="Pfam" id="PF05198">
    <property type="entry name" value="IF3_N"/>
    <property type="match status" value="1"/>
</dbReference>
<dbReference type="SUPFAM" id="SSF55200">
    <property type="entry name" value="Translation initiation factor IF3, C-terminal domain"/>
    <property type="match status" value="1"/>
</dbReference>
<dbReference type="SUPFAM" id="SSF54364">
    <property type="entry name" value="Translation initiation factor IF3, N-terminal domain"/>
    <property type="match status" value="1"/>
</dbReference>
<keyword id="KW-0963">Cytoplasm</keyword>
<keyword id="KW-0396">Initiation factor</keyword>
<keyword id="KW-0648">Protein biosynthesis</keyword>
<keyword id="KW-1185">Reference proteome</keyword>
<accession>Q7MVQ6</accession>
<feature type="chain" id="PRO_0000177552" description="Translation initiation factor IF-3">
    <location>
        <begin position="1"/>
        <end position="201"/>
    </location>
</feature>
<feature type="region of interest" description="Disordered" evidence="2">
    <location>
        <begin position="170"/>
        <end position="201"/>
    </location>
</feature>
<feature type="compositionally biased region" description="Polar residues" evidence="2">
    <location>
        <begin position="182"/>
        <end position="195"/>
    </location>
</feature>
<sequence length="201" mass="23148">MAIDKTKNQHRINEAIRVKEVRLVGDNVEQGVYNIQEARRIAESQDLDLVEISPNADPPVCRVTDYQKFVYQLKKKAKEQKAKSVKIVIKEIRFGPQTDDHDYNFKLKHAKEFLQEGSKVKAYVFFRGRSILFKEQGEVLLLRFANDLEDFARVEQMPILEGKRMTIMLTPKSASKKGHTPPKTQVEASKQANESAETEEE</sequence>
<gene>
    <name evidence="1" type="primary">infC</name>
    <name type="ordered locus">PG_0991</name>
</gene>
<proteinExistence type="inferred from homology"/>
<name>IF3_PORGI</name>
<evidence type="ECO:0000255" key="1">
    <source>
        <dbReference type="HAMAP-Rule" id="MF_00080"/>
    </source>
</evidence>
<evidence type="ECO:0000256" key="2">
    <source>
        <dbReference type="SAM" id="MobiDB-lite"/>
    </source>
</evidence>
<reference key="1">
    <citation type="journal article" date="2003" name="J. Bacteriol.">
        <title>Complete genome sequence of the oral pathogenic bacterium Porphyromonas gingivalis strain W83.</title>
        <authorList>
            <person name="Nelson K.E."/>
            <person name="Fleischmann R.D."/>
            <person name="DeBoy R.T."/>
            <person name="Paulsen I.T."/>
            <person name="Fouts D.E."/>
            <person name="Eisen J.A."/>
            <person name="Daugherty S.C."/>
            <person name="Dodson R.J."/>
            <person name="Durkin A.S."/>
            <person name="Gwinn M.L."/>
            <person name="Haft D.H."/>
            <person name="Kolonay J.F."/>
            <person name="Nelson W.C."/>
            <person name="Mason T.M."/>
            <person name="Tallon L."/>
            <person name="Gray J."/>
            <person name="Granger D."/>
            <person name="Tettelin H."/>
            <person name="Dong H."/>
            <person name="Galvin J.L."/>
            <person name="Duncan M.J."/>
            <person name="Dewhirst F.E."/>
            <person name="Fraser C.M."/>
        </authorList>
    </citation>
    <scope>NUCLEOTIDE SEQUENCE [LARGE SCALE GENOMIC DNA]</scope>
    <source>
        <strain>ATCC BAA-308 / W83</strain>
    </source>
</reference>
<protein>
    <recommendedName>
        <fullName evidence="1">Translation initiation factor IF-3</fullName>
    </recommendedName>
</protein>
<organism>
    <name type="scientific">Porphyromonas gingivalis (strain ATCC BAA-308 / W83)</name>
    <dbReference type="NCBI Taxonomy" id="242619"/>
    <lineage>
        <taxon>Bacteria</taxon>
        <taxon>Pseudomonadati</taxon>
        <taxon>Bacteroidota</taxon>
        <taxon>Bacteroidia</taxon>
        <taxon>Bacteroidales</taxon>
        <taxon>Porphyromonadaceae</taxon>
        <taxon>Porphyromonas</taxon>
    </lineage>
</organism>